<accession>B8G663</accession>
<name>PDXS_CHLAD</name>
<feature type="chain" id="PRO_1000188216" description="Pyridoxal 5'-phosphate synthase subunit PdxS">
    <location>
        <begin position="1"/>
        <end position="293"/>
    </location>
</feature>
<feature type="active site" description="Schiff-base intermediate with D-ribose 5-phosphate" evidence="1">
    <location>
        <position position="80"/>
    </location>
</feature>
<feature type="binding site" evidence="1">
    <location>
        <position position="23"/>
    </location>
    <ligand>
        <name>D-ribose 5-phosphate</name>
        <dbReference type="ChEBI" id="CHEBI:78346"/>
    </ligand>
</feature>
<feature type="binding site" evidence="1">
    <location>
        <position position="152"/>
    </location>
    <ligand>
        <name>D-ribose 5-phosphate</name>
        <dbReference type="ChEBI" id="CHEBI:78346"/>
    </ligand>
</feature>
<feature type="binding site" evidence="1">
    <location>
        <position position="164"/>
    </location>
    <ligand>
        <name>D-glyceraldehyde 3-phosphate</name>
        <dbReference type="ChEBI" id="CHEBI:59776"/>
    </ligand>
</feature>
<feature type="binding site" evidence="1">
    <location>
        <position position="213"/>
    </location>
    <ligand>
        <name>D-ribose 5-phosphate</name>
        <dbReference type="ChEBI" id="CHEBI:78346"/>
    </ligand>
</feature>
<feature type="binding site" evidence="1">
    <location>
        <begin position="234"/>
        <end position="235"/>
    </location>
    <ligand>
        <name>D-ribose 5-phosphate</name>
        <dbReference type="ChEBI" id="CHEBI:78346"/>
    </ligand>
</feature>
<organism>
    <name type="scientific">Chloroflexus aggregans (strain MD-66 / DSM 9485)</name>
    <dbReference type="NCBI Taxonomy" id="326427"/>
    <lineage>
        <taxon>Bacteria</taxon>
        <taxon>Bacillati</taxon>
        <taxon>Chloroflexota</taxon>
        <taxon>Chloroflexia</taxon>
        <taxon>Chloroflexales</taxon>
        <taxon>Chloroflexineae</taxon>
        <taxon>Chloroflexaceae</taxon>
        <taxon>Chloroflexus</taxon>
    </lineage>
</organism>
<proteinExistence type="inferred from homology"/>
<comment type="function">
    <text evidence="1">Catalyzes the formation of pyridoxal 5'-phosphate from ribose 5-phosphate (RBP), glyceraldehyde 3-phosphate (G3P) and ammonia. The ammonia is provided by the PdxT subunit. Can also use ribulose 5-phosphate and dihydroxyacetone phosphate as substrates, resulting from enzyme-catalyzed isomerization of RBP and G3P, respectively.</text>
</comment>
<comment type="catalytic activity">
    <reaction evidence="1">
        <text>aldehydo-D-ribose 5-phosphate + D-glyceraldehyde 3-phosphate + L-glutamine = pyridoxal 5'-phosphate + L-glutamate + phosphate + 3 H2O + H(+)</text>
        <dbReference type="Rhea" id="RHEA:31507"/>
        <dbReference type="ChEBI" id="CHEBI:15377"/>
        <dbReference type="ChEBI" id="CHEBI:15378"/>
        <dbReference type="ChEBI" id="CHEBI:29985"/>
        <dbReference type="ChEBI" id="CHEBI:43474"/>
        <dbReference type="ChEBI" id="CHEBI:58273"/>
        <dbReference type="ChEBI" id="CHEBI:58359"/>
        <dbReference type="ChEBI" id="CHEBI:59776"/>
        <dbReference type="ChEBI" id="CHEBI:597326"/>
        <dbReference type="EC" id="4.3.3.6"/>
    </reaction>
</comment>
<comment type="pathway">
    <text evidence="1">Cofactor biosynthesis; pyridoxal 5'-phosphate biosynthesis.</text>
</comment>
<comment type="subunit">
    <text evidence="1">In the presence of PdxT, forms a dodecamer of heterodimers.</text>
</comment>
<comment type="similarity">
    <text evidence="1">Belongs to the PdxS/SNZ family.</text>
</comment>
<evidence type="ECO:0000255" key="1">
    <source>
        <dbReference type="HAMAP-Rule" id="MF_01824"/>
    </source>
</evidence>
<dbReference type="EC" id="4.3.3.6" evidence="1"/>
<dbReference type="EMBL" id="CP001337">
    <property type="protein sequence ID" value="ACL25796.1"/>
    <property type="molecule type" value="Genomic_DNA"/>
</dbReference>
<dbReference type="RefSeq" id="WP_015941652.1">
    <property type="nucleotide sequence ID" value="NC_011831.1"/>
</dbReference>
<dbReference type="SMR" id="B8G663"/>
<dbReference type="STRING" id="326427.Cagg_2936"/>
<dbReference type="KEGG" id="cag:Cagg_2936"/>
<dbReference type="eggNOG" id="COG0214">
    <property type="taxonomic scope" value="Bacteria"/>
</dbReference>
<dbReference type="HOGENOM" id="CLU_055352_1_0_0"/>
<dbReference type="OrthoDB" id="9772545at2"/>
<dbReference type="UniPathway" id="UPA00245"/>
<dbReference type="Proteomes" id="UP000002508">
    <property type="component" value="Chromosome"/>
</dbReference>
<dbReference type="GO" id="GO:0036381">
    <property type="term" value="F:pyridoxal 5'-phosphate synthase (glutamine hydrolysing) activity"/>
    <property type="evidence" value="ECO:0007669"/>
    <property type="project" value="UniProtKB-UniRule"/>
</dbReference>
<dbReference type="GO" id="GO:0006520">
    <property type="term" value="P:amino acid metabolic process"/>
    <property type="evidence" value="ECO:0007669"/>
    <property type="project" value="TreeGrafter"/>
</dbReference>
<dbReference type="GO" id="GO:0042823">
    <property type="term" value="P:pyridoxal phosphate biosynthetic process"/>
    <property type="evidence" value="ECO:0007669"/>
    <property type="project" value="UniProtKB-UniRule"/>
</dbReference>
<dbReference type="GO" id="GO:0008615">
    <property type="term" value="P:pyridoxine biosynthetic process"/>
    <property type="evidence" value="ECO:0007669"/>
    <property type="project" value="TreeGrafter"/>
</dbReference>
<dbReference type="CDD" id="cd04727">
    <property type="entry name" value="pdxS"/>
    <property type="match status" value="1"/>
</dbReference>
<dbReference type="FunFam" id="3.20.20.70:FF:000001">
    <property type="entry name" value="Pyridoxine biosynthesis protein PDX1"/>
    <property type="match status" value="1"/>
</dbReference>
<dbReference type="Gene3D" id="3.20.20.70">
    <property type="entry name" value="Aldolase class I"/>
    <property type="match status" value="1"/>
</dbReference>
<dbReference type="HAMAP" id="MF_01824">
    <property type="entry name" value="PdxS"/>
    <property type="match status" value="1"/>
</dbReference>
<dbReference type="InterPro" id="IPR013785">
    <property type="entry name" value="Aldolase_TIM"/>
</dbReference>
<dbReference type="InterPro" id="IPR001852">
    <property type="entry name" value="PdxS/SNZ"/>
</dbReference>
<dbReference type="InterPro" id="IPR033755">
    <property type="entry name" value="PdxS/SNZ_N"/>
</dbReference>
<dbReference type="InterPro" id="IPR011060">
    <property type="entry name" value="RibuloseP-bd_barrel"/>
</dbReference>
<dbReference type="NCBIfam" id="NF003215">
    <property type="entry name" value="PRK04180.1"/>
    <property type="match status" value="1"/>
</dbReference>
<dbReference type="NCBIfam" id="TIGR00343">
    <property type="entry name" value="pyridoxal 5'-phosphate synthase lyase subunit PdxS"/>
    <property type="match status" value="1"/>
</dbReference>
<dbReference type="PANTHER" id="PTHR31829">
    <property type="entry name" value="PYRIDOXAL 5'-PHOSPHATE SYNTHASE SUBUNIT SNZ1-RELATED"/>
    <property type="match status" value="1"/>
</dbReference>
<dbReference type="PANTHER" id="PTHR31829:SF0">
    <property type="entry name" value="PYRIDOXAL 5'-PHOSPHATE SYNTHASE SUBUNIT SNZ1-RELATED"/>
    <property type="match status" value="1"/>
</dbReference>
<dbReference type="Pfam" id="PF01680">
    <property type="entry name" value="SOR_SNZ"/>
    <property type="match status" value="1"/>
</dbReference>
<dbReference type="PIRSF" id="PIRSF029271">
    <property type="entry name" value="Pdx1"/>
    <property type="match status" value="1"/>
</dbReference>
<dbReference type="SUPFAM" id="SSF51366">
    <property type="entry name" value="Ribulose-phoshate binding barrel"/>
    <property type="match status" value="1"/>
</dbReference>
<dbReference type="PROSITE" id="PS01235">
    <property type="entry name" value="PDXS_SNZ_1"/>
    <property type="match status" value="1"/>
</dbReference>
<dbReference type="PROSITE" id="PS51129">
    <property type="entry name" value="PDXS_SNZ_2"/>
    <property type="match status" value="1"/>
</dbReference>
<protein>
    <recommendedName>
        <fullName evidence="1">Pyridoxal 5'-phosphate synthase subunit PdxS</fullName>
        <shortName evidence="1">PLP synthase subunit PdxS</shortName>
        <ecNumber evidence="1">4.3.3.6</ecNumber>
    </recommendedName>
    <alternativeName>
        <fullName evidence="1">Pdx1</fullName>
    </alternativeName>
</protein>
<keyword id="KW-0456">Lyase</keyword>
<keyword id="KW-0663">Pyridoxal phosphate</keyword>
<keyword id="KW-0704">Schiff base</keyword>
<gene>
    <name evidence="1" type="primary">pdxS</name>
    <name type="ordered locus">Cagg_2936</name>
</gene>
<reference key="1">
    <citation type="submission" date="2008-12" db="EMBL/GenBank/DDBJ databases">
        <title>Complete sequence of Chloroflexus aggregans DSM 9485.</title>
        <authorList>
            <consortium name="US DOE Joint Genome Institute"/>
            <person name="Lucas S."/>
            <person name="Copeland A."/>
            <person name="Lapidus A."/>
            <person name="Glavina del Rio T."/>
            <person name="Dalin E."/>
            <person name="Tice H."/>
            <person name="Pitluck S."/>
            <person name="Foster B."/>
            <person name="Larimer F."/>
            <person name="Land M."/>
            <person name="Hauser L."/>
            <person name="Kyrpides N."/>
            <person name="Mikhailova N."/>
            <person name="Bryant D.A."/>
            <person name="Richardson P."/>
        </authorList>
    </citation>
    <scope>NUCLEOTIDE SEQUENCE [LARGE SCALE GENOMIC DNA]</scope>
    <source>
        <strain>MD-66 / DSM 9485</strain>
    </source>
</reference>
<sequence length="293" mass="31590">MEKSTWTTKVGLAQMLKGGVIMDVVTPEQARIAEEAGAVAVMALERVPADIRAQGGVARMSDPELILAIKQAVTIPVMAKARIGHFVEAQVLEAIGVDYIDESEVLTPADEEHHINKHKFRVPFVCGCRNLGEALRRIAEGAAMLRTKGEAGTGNVVEAVRHARAVYSEIRRLQSMNEDELFTYAKQIQAPYELVKQVATEGKLPVVNFAAGGIATPADAALLMQLGVDGIFVGSGIFKSGNPIKRARAIVEATTHYNDPEIIAEVSKGLGEAMVGINIDQIPAEQLMARRGW</sequence>